<dbReference type="EMBL" id="AJ851176">
    <property type="protein sequence ID" value="CAH64849.1"/>
    <property type="molecule type" value="mRNA"/>
</dbReference>
<dbReference type="SMR" id="Q5K0D2"/>
<dbReference type="ConoServer" id="1065">
    <property type="toxin name" value="Conotoxin-9 precursor"/>
</dbReference>
<dbReference type="GO" id="GO:0005576">
    <property type="term" value="C:extracellular region"/>
    <property type="evidence" value="ECO:0007669"/>
    <property type="project" value="UniProtKB-SubCell"/>
</dbReference>
<dbReference type="GO" id="GO:0044231">
    <property type="term" value="C:host cell presynaptic membrane"/>
    <property type="evidence" value="ECO:0007669"/>
    <property type="project" value="UniProtKB-KW"/>
</dbReference>
<dbReference type="GO" id="GO:0005246">
    <property type="term" value="F:calcium channel regulator activity"/>
    <property type="evidence" value="ECO:0007669"/>
    <property type="project" value="UniProtKB-KW"/>
</dbReference>
<dbReference type="GO" id="GO:0019871">
    <property type="term" value="F:sodium channel inhibitor activity"/>
    <property type="evidence" value="ECO:0007669"/>
    <property type="project" value="InterPro"/>
</dbReference>
<dbReference type="GO" id="GO:0090729">
    <property type="term" value="F:toxin activity"/>
    <property type="evidence" value="ECO:0007669"/>
    <property type="project" value="UniProtKB-KW"/>
</dbReference>
<dbReference type="InterPro" id="IPR004214">
    <property type="entry name" value="Conotoxin"/>
</dbReference>
<dbReference type="InterPro" id="IPR012322">
    <property type="entry name" value="Conotoxin_d-typ_CS"/>
</dbReference>
<dbReference type="InterPro" id="IPR012321">
    <property type="entry name" value="Conotoxin_omega-typ_CS"/>
</dbReference>
<dbReference type="Pfam" id="PF02950">
    <property type="entry name" value="Conotoxin"/>
    <property type="match status" value="1"/>
</dbReference>
<dbReference type="PROSITE" id="PS60005">
    <property type="entry name" value="DELTA_CONOTOXIN"/>
    <property type="match status" value="1"/>
</dbReference>
<dbReference type="PROSITE" id="PS60004">
    <property type="entry name" value="OMEGA_CONOTOXIN"/>
    <property type="match status" value="1"/>
</dbReference>
<comment type="function">
    <text evidence="1">Omega-conotoxins act at presynaptic membranes, they bind and block voltage-gated calcium channels (Cav).</text>
</comment>
<comment type="subcellular location">
    <subcellularLocation>
        <location evidence="1">Secreted</location>
    </subcellularLocation>
</comment>
<comment type="tissue specificity">
    <text>Expressed by the venom duct.</text>
</comment>
<comment type="domain">
    <text evidence="1">The presence of a 'disulfide through disulfide knot' structurally defines this protein as a knottin.</text>
</comment>
<comment type="domain">
    <text>The cysteine framework is VI/VII (C-C-CC-C-C).</text>
</comment>
<comment type="similarity">
    <text evidence="3">Belongs to the conotoxin O1 superfamily.</text>
</comment>
<name>O19_CONST</name>
<proteinExistence type="evidence at transcript level"/>
<evidence type="ECO:0000250" key="1"/>
<evidence type="ECO:0000255" key="2"/>
<evidence type="ECO:0000305" key="3"/>
<sequence>MKLTCMMIAAVLFLTTWTFVTADDSRYGLKNLFPKARHEMKNPEASKLNKREGCSSGGTFCGIHPGLCCSEFCFLWCITFID</sequence>
<organism>
    <name type="scientific">Conus striatus</name>
    <name type="common">Striated cone</name>
    <dbReference type="NCBI Taxonomy" id="6493"/>
    <lineage>
        <taxon>Eukaryota</taxon>
        <taxon>Metazoa</taxon>
        <taxon>Spiralia</taxon>
        <taxon>Lophotrochozoa</taxon>
        <taxon>Mollusca</taxon>
        <taxon>Gastropoda</taxon>
        <taxon>Caenogastropoda</taxon>
        <taxon>Neogastropoda</taxon>
        <taxon>Conoidea</taxon>
        <taxon>Conidae</taxon>
        <taxon>Conus</taxon>
        <taxon>Pionoconus</taxon>
    </lineage>
</organism>
<feature type="signal peptide" evidence="2">
    <location>
        <begin position="1"/>
        <end position="22"/>
    </location>
</feature>
<feature type="propeptide" id="PRO_0000034944" evidence="1">
    <location>
        <begin position="23"/>
        <end position="51"/>
    </location>
</feature>
<feature type="peptide" id="PRO_0000034945" description="Omega-conotoxin-like 9">
    <location>
        <begin position="52"/>
        <end position="82"/>
    </location>
</feature>
<feature type="disulfide bond" evidence="1">
    <location>
        <begin position="54"/>
        <end position="69"/>
    </location>
</feature>
<feature type="disulfide bond" evidence="1">
    <location>
        <begin position="61"/>
        <end position="73"/>
    </location>
</feature>
<feature type="disulfide bond" evidence="1">
    <location>
        <begin position="68"/>
        <end position="77"/>
    </location>
</feature>
<accession>Q5K0D2</accession>
<keyword id="KW-0108">Calcium channel impairing toxin</keyword>
<keyword id="KW-0165">Cleavage on pair of basic residues</keyword>
<keyword id="KW-1015">Disulfide bond</keyword>
<keyword id="KW-0872">Ion channel impairing toxin</keyword>
<keyword id="KW-0960">Knottin</keyword>
<keyword id="KW-0528">Neurotoxin</keyword>
<keyword id="KW-0638">Presynaptic neurotoxin</keyword>
<keyword id="KW-0964">Secreted</keyword>
<keyword id="KW-0732">Signal</keyword>
<keyword id="KW-0800">Toxin</keyword>
<keyword id="KW-1218">Voltage-gated calcium channel impairing toxin</keyword>
<reference key="1">
    <citation type="journal article" date="2005" name="Peptides">
        <title>Direct cDNA cloning of novel conopeptide precursors of the O-superfamily.</title>
        <authorList>
            <person name="Kauferstein S."/>
            <person name="Melaun C."/>
            <person name="Mebs D."/>
        </authorList>
    </citation>
    <scope>NUCLEOTIDE SEQUENCE [MRNA]</scope>
    <source>
        <tissue>Venom duct</tissue>
    </source>
</reference>
<protein>
    <recommendedName>
        <fullName>Omega-conotoxin-like 9</fullName>
    </recommendedName>
</protein>